<dbReference type="EMBL" id="CP000099">
    <property type="protein sequence ID" value="AAZ69437.1"/>
    <property type="molecule type" value="Genomic_DNA"/>
</dbReference>
<dbReference type="SMR" id="Q46FA5"/>
<dbReference type="STRING" id="269797.Mbar_A0455"/>
<dbReference type="PaxDb" id="269797-Mbar_A0455"/>
<dbReference type="KEGG" id="mba:Mbar_A0455"/>
<dbReference type="eggNOG" id="arCOG04179">
    <property type="taxonomic scope" value="Archaea"/>
</dbReference>
<dbReference type="HOGENOM" id="CLU_122978_3_0_2"/>
<dbReference type="OrthoDB" id="7912at2157"/>
<dbReference type="GO" id="GO:0005829">
    <property type="term" value="C:cytosol"/>
    <property type="evidence" value="ECO:0007669"/>
    <property type="project" value="TreeGrafter"/>
</dbReference>
<dbReference type="GO" id="GO:0003677">
    <property type="term" value="F:DNA binding"/>
    <property type="evidence" value="ECO:0007669"/>
    <property type="project" value="UniProtKB-UniRule"/>
</dbReference>
<dbReference type="FunFam" id="1.10.8.140:FF:000012">
    <property type="entry name" value="DNA-binding protein MSBR3_2977"/>
    <property type="match status" value="1"/>
</dbReference>
<dbReference type="Gene3D" id="1.10.8.140">
    <property type="entry name" value="PDCD5-like"/>
    <property type="match status" value="1"/>
</dbReference>
<dbReference type="HAMAP" id="MF_00026">
    <property type="entry name" value="dsDNA_bind"/>
    <property type="match status" value="1"/>
</dbReference>
<dbReference type="InterPro" id="IPR022889">
    <property type="entry name" value="DNA_bind_arc"/>
</dbReference>
<dbReference type="InterPro" id="IPR002836">
    <property type="entry name" value="PDCD5-like"/>
</dbReference>
<dbReference type="InterPro" id="IPR036883">
    <property type="entry name" value="PDCD5-like_sf"/>
</dbReference>
<dbReference type="NCBIfam" id="NF003268">
    <property type="entry name" value="PRK04239.1"/>
    <property type="match status" value="1"/>
</dbReference>
<dbReference type="PANTHER" id="PTHR10840">
    <property type="entry name" value="PROGRAMMED CELL DEATH PROTEIN 5"/>
    <property type="match status" value="1"/>
</dbReference>
<dbReference type="PANTHER" id="PTHR10840:SF0">
    <property type="entry name" value="PROGRAMMED CELL DEATH PROTEIN 5"/>
    <property type="match status" value="1"/>
</dbReference>
<dbReference type="Pfam" id="PF01984">
    <property type="entry name" value="dsDNA_bind"/>
    <property type="match status" value="1"/>
</dbReference>
<dbReference type="PIRSF" id="PIRSF015730">
    <property type="entry name" value="TFAR19"/>
    <property type="match status" value="1"/>
</dbReference>
<dbReference type="SUPFAM" id="SSF46950">
    <property type="entry name" value="Double-stranded DNA-binding domain"/>
    <property type="match status" value="1"/>
</dbReference>
<feature type="chain" id="PRO_0000284563" description="DNA-binding protein Mbar_A0455">
    <location>
        <begin position="1"/>
        <end position="122"/>
    </location>
</feature>
<protein>
    <recommendedName>
        <fullName evidence="1">DNA-binding protein Mbar_A0455</fullName>
    </recommendedName>
</protein>
<keyword id="KW-0238">DNA-binding</keyword>
<accession>Q46FA5</accession>
<gene>
    <name type="ordered locus">Mbar_A0455</name>
</gene>
<name>Y455_METBF</name>
<evidence type="ECO:0000255" key="1">
    <source>
        <dbReference type="HAMAP-Rule" id="MF_00026"/>
    </source>
</evidence>
<reference key="1">
    <citation type="journal article" date="2006" name="J. Bacteriol.">
        <title>The Methanosarcina barkeri genome: comparative analysis with Methanosarcina acetivorans and Methanosarcina mazei reveals extensive rearrangement within methanosarcinal genomes.</title>
        <authorList>
            <person name="Maeder D.L."/>
            <person name="Anderson I."/>
            <person name="Brettin T.S."/>
            <person name="Bruce D.C."/>
            <person name="Gilna P."/>
            <person name="Han C.S."/>
            <person name="Lapidus A."/>
            <person name="Metcalf W.W."/>
            <person name="Saunders E."/>
            <person name="Tapia R."/>
            <person name="Sowers K.R."/>
        </authorList>
    </citation>
    <scope>NUCLEOTIDE SEQUENCE [LARGE SCALE GENOMIC DNA]</scope>
    <source>
        <strain>Fusaro / DSM 804</strain>
    </source>
</reference>
<comment type="similarity">
    <text evidence="1">Belongs to the PDCD5 family.</text>
</comment>
<sequence length="122" mass="14107">MIAMSTMDDELNEIRKRRLAEIQRQQAQNQQSDIQAAYQQEQAKAEMEAQKQAILRQILTPEARERLTTLKMSRPAIGEQLEMQLISLAQSGRLPSQISDEQLKTLLMKMQPKKRKTSITRV</sequence>
<organism>
    <name type="scientific">Methanosarcina barkeri (strain Fusaro / DSM 804)</name>
    <dbReference type="NCBI Taxonomy" id="269797"/>
    <lineage>
        <taxon>Archaea</taxon>
        <taxon>Methanobacteriati</taxon>
        <taxon>Methanobacteriota</taxon>
        <taxon>Stenosarchaea group</taxon>
        <taxon>Methanomicrobia</taxon>
        <taxon>Methanosarcinales</taxon>
        <taxon>Methanosarcinaceae</taxon>
        <taxon>Methanosarcina</taxon>
    </lineage>
</organism>
<proteinExistence type="inferred from homology"/>